<dbReference type="EC" id="3.1.1.61" evidence="1"/>
<dbReference type="EC" id="3.5.1.44" evidence="1"/>
<dbReference type="EMBL" id="AE005674">
    <property type="protein sequence ID" value="AAN43485.1"/>
    <property type="molecule type" value="Genomic_DNA"/>
</dbReference>
<dbReference type="EMBL" id="AE014073">
    <property type="protein sequence ID" value="AAP17315.1"/>
    <property type="molecule type" value="Genomic_DNA"/>
</dbReference>
<dbReference type="RefSeq" id="NP_707778.1">
    <property type="nucleotide sequence ID" value="NC_004337.2"/>
</dbReference>
<dbReference type="RefSeq" id="WP_000036372.1">
    <property type="nucleotide sequence ID" value="NZ_WPGW01000105.1"/>
</dbReference>
<dbReference type="SMR" id="Q83R52"/>
<dbReference type="STRING" id="198214.SF1932"/>
<dbReference type="PaxDb" id="198214-SF1932"/>
<dbReference type="GeneID" id="1025137"/>
<dbReference type="KEGG" id="sfl:SF1932"/>
<dbReference type="KEGG" id="sfx:S2023"/>
<dbReference type="PATRIC" id="fig|198214.7.peg.2307"/>
<dbReference type="HOGENOM" id="CLU_000445_51_0_6"/>
<dbReference type="Proteomes" id="UP000001006">
    <property type="component" value="Chromosome"/>
</dbReference>
<dbReference type="Proteomes" id="UP000002673">
    <property type="component" value="Chromosome"/>
</dbReference>
<dbReference type="GO" id="GO:0005737">
    <property type="term" value="C:cytoplasm"/>
    <property type="evidence" value="ECO:0007669"/>
    <property type="project" value="UniProtKB-SubCell"/>
</dbReference>
<dbReference type="GO" id="GO:0000156">
    <property type="term" value="F:phosphorelay response regulator activity"/>
    <property type="evidence" value="ECO:0007669"/>
    <property type="project" value="InterPro"/>
</dbReference>
<dbReference type="GO" id="GO:0008984">
    <property type="term" value="F:protein-glutamate methylesterase activity"/>
    <property type="evidence" value="ECO:0007669"/>
    <property type="project" value="UniProtKB-UniRule"/>
</dbReference>
<dbReference type="GO" id="GO:0050568">
    <property type="term" value="F:protein-glutamine glutaminase activity"/>
    <property type="evidence" value="ECO:0007669"/>
    <property type="project" value="UniProtKB-UniRule"/>
</dbReference>
<dbReference type="GO" id="GO:0006935">
    <property type="term" value="P:chemotaxis"/>
    <property type="evidence" value="ECO:0007669"/>
    <property type="project" value="UniProtKB-UniRule"/>
</dbReference>
<dbReference type="CDD" id="cd16432">
    <property type="entry name" value="CheB_Rec"/>
    <property type="match status" value="1"/>
</dbReference>
<dbReference type="CDD" id="cd17541">
    <property type="entry name" value="REC_CheB-like"/>
    <property type="match status" value="1"/>
</dbReference>
<dbReference type="FunFam" id="3.40.50.180:FF:000001">
    <property type="entry name" value="Protein-glutamate methylesterase/protein-glutamine glutaminase"/>
    <property type="match status" value="1"/>
</dbReference>
<dbReference type="FunFam" id="3.40.50.2300:FF:000060">
    <property type="entry name" value="Protein-glutamate methylesterase/protein-glutamine glutaminase"/>
    <property type="match status" value="1"/>
</dbReference>
<dbReference type="Gene3D" id="3.40.50.2300">
    <property type="match status" value="1"/>
</dbReference>
<dbReference type="Gene3D" id="3.40.50.180">
    <property type="entry name" value="Methylesterase CheB, C-terminal domain"/>
    <property type="match status" value="1"/>
</dbReference>
<dbReference type="HAMAP" id="MF_00099">
    <property type="entry name" value="CheB_chemtxs"/>
    <property type="match status" value="1"/>
</dbReference>
<dbReference type="InterPro" id="IPR008248">
    <property type="entry name" value="CheB-like"/>
</dbReference>
<dbReference type="InterPro" id="IPR035909">
    <property type="entry name" value="CheB_C"/>
</dbReference>
<dbReference type="InterPro" id="IPR011006">
    <property type="entry name" value="CheY-like_superfamily"/>
</dbReference>
<dbReference type="InterPro" id="IPR000673">
    <property type="entry name" value="Sig_transdc_resp-reg_Me-estase"/>
</dbReference>
<dbReference type="InterPro" id="IPR001789">
    <property type="entry name" value="Sig_transdc_resp-reg_receiver"/>
</dbReference>
<dbReference type="NCBIfam" id="NF001965">
    <property type="entry name" value="PRK00742.1"/>
    <property type="match status" value="1"/>
</dbReference>
<dbReference type="NCBIfam" id="NF009206">
    <property type="entry name" value="PRK12555.1"/>
    <property type="match status" value="1"/>
</dbReference>
<dbReference type="PANTHER" id="PTHR42872">
    <property type="entry name" value="PROTEIN-GLUTAMATE METHYLESTERASE/PROTEIN-GLUTAMINE GLUTAMINASE"/>
    <property type="match status" value="1"/>
</dbReference>
<dbReference type="PANTHER" id="PTHR42872:SF6">
    <property type="entry name" value="PROTEIN-GLUTAMATE METHYLESTERASE_PROTEIN-GLUTAMINE GLUTAMINASE"/>
    <property type="match status" value="1"/>
</dbReference>
<dbReference type="Pfam" id="PF01339">
    <property type="entry name" value="CheB_methylest"/>
    <property type="match status" value="1"/>
</dbReference>
<dbReference type="Pfam" id="PF00072">
    <property type="entry name" value="Response_reg"/>
    <property type="match status" value="1"/>
</dbReference>
<dbReference type="PIRSF" id="PIRSF000876">
    <property type="entry name" value="RR_chemtxs_CheB"/>
    <property type="match status" value="1"/>
</dbReference>
<dbReference type="SMART" id="SM00448">
    <property type="entry name" value="REC"/>
    <property type="match status" value="1"/>
</dbReference>
<dbReference type="SUPFAM" id="SSF52172">
    <property type="entry name" value="CheY-like"/>
    <property type="match status" value="1"/>
</dbReference>
<dbReference type="SUPFAM" id="SSF52738">
    <property type="entry name" value="Methylesterase CheB, C-terminal domain"/>
    <property type="match status" value="1"/>
</dbReference>
<dbReference type="PROSITE" id="PS50122">
    <property type="entry name" value="CHEB"/>
    <property type="match status" value="1"/>
</dbReference>
<dbReference type="PROSITE" id="PS50110">
    <property type="entry name" value="RESPONSE_REGULATORY"/>
    <property type="match status" value="1"/>
</dbReference>
<feature type="chain" id="PRO_0000158031" description="Protein-glutamate methylesterase/protein-glutamine glutaminase">
    <location>
        <begin position="1"/>
        <end position="349"/>
    </location>
</feature>
<feature type="domain" description="Response regulatory" evidence="1">
    <location>
        <begin position="5"/>
        <end position="122"/>
    </location>
</feature>
<feature type="domain" description="CheB-type methylesterase" evidence="1">
    <location>
        <begin position="152"/>
        <end position="344"/>
    </location>
</feature>
<feature type="active site" evidence="1">
    <location>
        <position position="164"/>
    </location>
</feature>
<feature type="active site" evidence="1">
    <location>
        <position position="190"/>
    </location>
</feature>
<feature type="active site" evidence="1">
    <location>
        <position position="286"/>
    </location>
</feature>
<feature type="modified residue" description="4-aspartylphosphate" evidence="1">
    <location>
        <position position="56"/>
    </location>
</feature>
<sequence>MSKIRVLSVDDSALMRQIMTEIINSHSDMEMVATAPDPLVARDLIKKFNPDVLTLDVEMPRMDGLDFLEKLMRLRPMPVVMVSSLTGKGSEVTLRALELGAIDFVTKPQLGIREGMLAYSEMIAEKVRTAAKASLAAHKPLSAPTTLKAGPLLSSEKLIAIGASTGGTEAIRHVLQPLPLSSPALLITQHMPPGFTRSFADRLNKLCQIGVKEAEDGERVLPGHAYIAPGDRHMELARSGANYQIKIHDGPAVNRHRPSVDVLFHSVAKQAGRNAVGVILTGMGNDGAAGMLAMRQAGAWTLAQNEASCVVFGMPREAINMGGVCEVVDLSQVSQQMLATISAGQAIRI</sequence>
<protein>
    <recommendedName>
        <fullName evidence="1">Protein-glutamate methylesterase/protein-glutamine glutaminase</fullName>
        <ecNumber evidence="1">3.1.1.61</ecNumber>
        <ecNumber evidence="1">3.5.1.44</ecNumber>
    </recommendedName>
</protein>
<organism>
    <name type="scientific">Shigella flexneri</name>
    <dbReference type="NCBI Taxonomy" id="623"/>
    <lineage>
        <taxon>Bacteria</taxon>
        <taxon>Pseudomonadati</taxon>
        <taxon>Pseudomonadota</taxon>
        <taxon>Gammaproteobacteria</taxon>
        <taxon>Enterobacterales</taxon>
        <taxon>Enterobacteriaceae</taxon>
        <taxon>Shigella</taxon>
    </lineage>
</organism>
<proteinExistence type="inferred from homology"/>
<keyword id="KW-0145">Chemotaxis</keyword>
<keyword id="KW-0963">Cytoplasm</keyword>
<keyword id="KW-0378">Hydrolase</keyword>
<keyword id="KW-0597">Phosphoprotein</keyword>
<keyword id="KW-1185">Reference proteome</keyword>
<evidence type="ECO:0000255" key="1">
    <source>
        <dbReference type="HAMAP-Rule" id="MF_00099"/>
    </source>
</evidence>
<reference key="1">
    <citation type="journal article" date="2002" name="Nucleic Acids Res.">
        <title>Genome sequence of Shigella flexneri 2a: insights into pathogenicity through comparison with genomes of Escherichia coli K12 and O157.</title>
        <authorList>
            <person name="Jin Q."/>
            <person name="Yuan Z."/>
            <person name="Xu J."/>
            <person name="Wang Y."/>
            <person name="Shen Y."/>
            <person name="Lu W."/>
            <person name="Wang J."/>
            <person name="Liu H."/>
            <person name="Yang J."/>
            <person name="Yang F."/>
            <person name="Zhang X."/>
            <person name="Zhang J."/>
            <person name="Yang G."/>
            <person name="Wu H."/>
            <person name="Qu D."/>
            <person name="Dong J."/>
            <person name="Sun L."/>
            <person name="Xue Y."/>
            <person name="Zhao A."/>
            <person name="Gao Y."/>
            <person name="Zhu J."/>
            <person name="Kan B."/>
            <person name="Ding K."/>
            <person name="Chen S."/>
            <person name="Cheng H."/>
            <person name="Yao Z."/>
            <person name="He B."/>
            <person name="Chen R."/>
            <person name="Ma D."/>
            <person name="Qiang B."/>
            <person name="Wen Y."/>
            <person name="Hou Y."/>
            <person name="Yu J."/>
        </authorList>
    </citation>
    <scope>NUCLEOTIDE SEQUENCE [LARGE SCALE GENOMIC DNA]</scope>
    <source>
        <strain>301 / Serotype 2a</strain>
    </source>
</reference>
<reference key="2">
    <citation type="journal article" date="2003" name="Infect. Immun.">
        <title>Complete genome sequence and comparative genomics of Shigella flexneri serotype 2a strain 2457T.</title>
        <authorList>
            <person name="Wei J."/>
            <person name="Goldberg M.B."/>
            <person name="Burland V."/>
            <person name="Venkatesan M.M."/>
            <person name="Deng W."/>
            <person name="Fournier G."/>
            <person name="Mayhew G.F."/>
            <person name="Plunkett G. III"/>
            <person name="Rose D.J."/>
            <person name="Darling A."/>
            <person name="Mau B."/>
            <person name="Perna N.T."/>
            <person name="Payne S.M."/>
            <person name="Runyen-Janecky L.J."/>
            <person name="Zhou S."/>
            <person name="Schwartz D.C."/>
            <person name="Blattner F.R."/>
        </authorList>
    </citation>
    <scope>NUCLEOTIDE SEQUENCE [LARGE SCALE GENOMIC DNA]</scope>
    <source>
        <strain>ATCC 700930 / 2457T / Serotype 2a</strain>
    </source>
</reference>
<accession>Q83R52</accession>
<accession>Q7C182</accession>
<name>CHEB_SHIFL</name>
<gene>
    <name evidence="1" type="primary">cheB</name>
    <name type="ordered locus">SF1932</name>
    <name type="ordered locus">S2023</name>
</gene>
<comment type="function">
    <text evidence="1">Involved in chemotaxis. Part of a chemotaxis signal transduction system that modulates chemotaxis in response to various stimuli. Catalyzes the demethylation of specific methylglutamate residues introduced into the chemoreceptors (methyl-accepting chemotaxis proteins or MCP) by CheR. Also mediates the irreversible deamidation of specific glutamine residues to glutamic acid.</text>
</comment>
<comment type="catalytic activity">
    <reaction evidence="1">
        <text>[protein]-L-glutamate 5-O-methyl ester + H2O = L-glutamyl-[protein] + methanol + H(+)</text>
        <dbReference type="Rhea" id="RHEA:23236"/>
        <dbReference type="Rhea" id="RHEA-COMP:10208"/>
        <dbReference type="Rhea" id="RHEA-COMP:10311"/>
        <dbReference type="ChEBI" id="CHEBI:15377"/>
        <dbReference type="ChEBI" id="CHEBI:15378"/>
        <dbReference type="ChEBI" id="CHEBI:17790"/>
        <dbReference type="ChEBI" id="CHEBI:29973"/>
        <dbReference type="ChEBI" id="CHEBI:82795"/>
        <dbReference type="EC" id="3.1.1.61"/>
    </reaction>
</comment>
<comment type="catalytic activity">
    <reaction evidence="1">
        <text>L-glutaminyl-[protein] + H2O = L-glutamyl-[protein] + NH4(+)</text>
        <dbReference type="Rhea" id="RHEA:16441"/>
        <dbReference type="Rhea" id="RHEA-COMP:10207"/>
        <dbReference type="Rhea" id="RHEA-COMP:10208"/>
        <dbReference type="ChEBI" id="CHEBI:15377"/>
        <dbReference type="ChEBI" id="CHEBI:28938"/>
        <dbReference type="ChEBI" id="CHEBI:29973"/>
        <dbReference type="ChEBI" id="CHEBI:30011"/>
        <dbReference type="EC" id="3.5.1.44"/>
    </reaction>
</comment>
<comment type="subcellular location">
    <subcellularLocation>
        <location evidence="1">Cytoplasm</location>
    </subcellularLocation>
</comment>
<comment type="domain">
    <text evidence="1">Contains a C-terminal catalytic domain, and an N-terminal region which modulates catalytic activity.</text>
</comment>
<comment type="PTM">
    <text evidence="1">Phosphorylated by CheA. Phosphorylation of the N-terminal regulatory domain activates the methylesterase activity.</text>
</comment>
<comment type="similarity">
    <text evidence="1">Belongs to the CheB family.</text>
</comment>